<dbReference type="EC" id="2.3.1.225"/>
<dbReference type="EMBL" id="AE016820">
    <property type="protein sequence ID" value="AAS54554.1"/>
    <property type="molecule type" value="Genomic_DNA"/>
</dbReference>
<dbReference type="RefSeq" id="NP_986730.1">
    <property type="nucleotide sequence ID" value="NM_211792.1"/>
</dbReference>
<dbReference type="FunCoup" id="Q74ZZ2">
    <property type="interactions" value="41"/>
</dbReference>
<dbReference type="STRING" id="284811.Q74ZZ2"/>
<dbReference type="EnsemblFungi" id="AAS54554">
    <property type="protein sequence ID" value="AAS54554"/>
    <property type="gene ID" value="AGOS_AGR065W"/>
</dbReference>
<dbReference type="GeneID" id="4623031"/>
<dbReference type="KEGG" id="ago:AGOS_AGR065W"/>
<dbReference type="eggNOG" id="KOG1312">
    <property type="taxonomic scope" value="Eukaryota"/>
</dbReference>
<dbReference type="HOGENOM" id="CLU_042181_2_0_1"/>
<dbReference type="InParanoid" id="Q74ZZ2"/>
<dbReference type="OMA" id="STNAYDH"/>
<dbReference type="OrthoDB" id="9909019at2759"/>
<dbReference type="Proteomes" id="UP000000591">
    <property type="component" value="Chromosome VII"/>
</dbReference>
<dbReference type="GO" id="GO:0030479">
    <property type="term" value="C:actin cortical patch"/>
    <property type="evidence" value="ECO:0007669"/>
    <property type="project" value="EnsemblFungi"/>
</dbReference>
<dbReference type="GO" id="GO:0032432">
    <property type="term" value="C:actin filament bundle"/>
    <property type="evidence" value="ECO:0007669"/>
    <property type="project" value="EnsemblFungi"/>
</dbReference>
<dbReference type="GO" id="GO:0005783">
    <property type="term" value="C:endoplasmic reticulum"/>
    <property type="evidence" value="ECO:0000318"/>
    <property type="project" value="GO_Central"/>
</dbReference>
<dbReference type="GO" id="GO:0005789">
    <property type="term" value="C:endoplasmic reticulum membrane"/>
    <property type="evidence" value="ECO:0007669"/>
    <property type="project" value="UniProtKB-SubCell"/>
</dbReference>
<dbReference type="GO" id="GO:0005794">
    <property type="term" value="C:Golgi apparatus"/>
    <property type="evidence" value="ECO:0000318"/>
    <property type="project" value="GO_Central"/>
</dbReference>
<dbReference type="GO" id="GO:0019706">
    <property type="term" value="F:protein-cysteine S-palmitoyltransferase activity"/>
    <property type="evidence" value="ECO:0000318"/>
    <property type="project" value="GO_Central"/>
</dbReference>
<dbReference type="GO" id="GO:0030866">
    <property type="term" value="P:cortical actin cytoskeleton organization"/>
    <property type="evidence" value="ECO:0007669"/>
    <property type="project" value="EnsemblFungi"/>
</dbReference>
<dbReference type="GO" id="GO:0030010">
    <property type="term" value="P:establishment of cell polarity"/>
    <property type="evidence" value="ECO:0007669"/>
    <property type="project" value="EnsemblFungi"/>
</dbReference>
<dbReference type="GO" id="GO:0006612">
    <property type="term" value="P:protein targeting to membrane"/>
    <property type="evidence" value="ECO:0000318"/>
    <property type="project" value="GO_Central"/>
</dbReference>
<dbReference type="GO" id="GO:0017157">
    <property type="term" value="P:regulation of exocytosis"/>
    <property type="evidence" value="ECO:0007669"/>
    <property type="project" value="EnsemblFungi"/>
</dbReference>
<dbReference type="GO" id="GO:0042144">
    <property type="term" value="P:vacuole fusion, non-autophagic"/>
    <property type="evidence" value="ECO:0007669"/>
    <property type="project" value="EnsemblFungi"/>
</dbReference>
<dbReference type="InterPro" id="IPR001594">
    <property type="entry name" value="Palmitoyltrfase_DHHC"/>
</dbReference>
<dbReference type="InterPro" id="IPR039859">
    <property type="entry name" value="PFA4/ZDH16/20/ERF2-like"/>
</dbReference>
<dbReference type="PANTHER" id="PTHR22883:SF489">
    <property type="entry name" value="PALMITOYLTRANSFERASE SWF1"/>
    <property type="match status" value="1"/>
</dbReference>
<dbReference type="PANTHER" id="PTHR22883">
    <property type="entry name" value="ZINC FINGER DHHC DOMAIN CONTAINING PROTEIN"/>
    <property type="match status" value="1"/>
</dbReference>
<dbReference type="Pfam" id="PF01529">
    <property type="entry name" value="DHHC"/>
    <property type="match status" value="1"/>
</dbReference>
<dbReference type="PROSITE" id="PS50216">
    <property type="entry name" value="DHHC"/>
    <property type="match status" value="1"/>
</dbReference>
<evidence type="ECO:0000250" key="1"/>
<evidence type="ECO:0000255" key="2"/>
<evidence type="ECO:0000255" key="3">
    <source>
        <dbReference type="PROSITE-ProRule" id="PRU00067"/>
    </source>
</evidence>
<evidence type="ECO:0000305" key="4"/>
<sequence>MMGALCALAVTQAGLILAAPALRAYWPFSWYYHVVFRTVLQDTQRHRWKYWATPAFYAGVYAYCVWLFYGEVYAEIAKALWVPERWVLPAAVVAPAAAGVAAAATPAAVPADAAYDGLLFHDGVECRTCRVRKPARSRHCGVCGRCVPLADHHCVWLNNCVGRGNYGLFYLALGAHCALLTYGAVRLPLAAPAGRWPRALLALELLVASFAVLCVWFTATQVALVRDGMTTNEQDKWYAVQESMREGTLVRLRGRFYHRVEGGDGVEFYSTNAYDHRTYALHNEPYAVVTSHEEIPNVYDTGSFCENLRQRLDPQARIFRRRVRGL</sequence>
<feature type="chain" id="PRO_0000212984" description="Palmitoyltransferase SWF1">
    <location>
        <begin position="1"/>
        <end position="326"/>
    </location>
</feature>
<feature type="topological domain" description="Lumenal" evidence="2">
    <location>
        <position position="1"/>
    </location>
</feature>
<feature type="transmembrane region" description="Helical" evidence="2">
    <location>
        <begin position="2"/>
        <end position="22"/>
    </location>
</feature>
<feature type="topological domain" description="Cytoplasmic" evidence="2">
    <location>
        <begin position="23"/>
        <end position="49"/>
    </location>
</feature>
<feature type="transmembrane region" description="Helical" evidence="2">
    <location>
        <begin position="50"/>
        <end position="70"/>
    </location>
</feature>
<feature type="topological domain" description="Lumenal" evidence="2">
    <location>
        <begin position="71"/>
        <end position="85"/>
    </location>
</feature>
<feature type="transmembrane region" description="Helical" evidence="2">
    <location>
        <begin position="86"/>
        <end position="106"/>
    </location>
</feature>
<feature type="topological domain" description="Cytoplasmic" evidence="2">
    <location>
        <begin position="107"/>
        <end position="164"/>
    </location>
</feature>
<feature type="transmembrane region" description="Helical" evidence="2">
    <location>
        <begin position="165"/>
        <end position="185"/>
    </location>
</feature>
<feature type="topological domain" description="Lumenal" evidence="2">
    <location>
        <begin position="186"/>
        <end position="198"/>
    </location>
</feature>
<feature type="transmembrane region" description="Helical" evidence="2">
    <location>
        <begin position="199"/>
        <end position="219"/>
    </location>
</feature>
<feature type="topological domain" description="Cytoplasmic" evidence="2">
    <location>
        <begin position="220"/>
        <end position="326"/>
    </location>
</feature>
<feature type="domain" description="DHHC" evidence="3">
    <location>
        <begin position="124"/>
        <end position="174"/>
    </location>
</feature>
<organism>
    <name type="scientific">Eremothecium gossypii (strain ATCC 10895 / CBS 109.51 / FGSC 9923 / NRRL Y-1056)</name>
    <name type="common">Yeast</name>
    <name type="synonym">Ashbya gossypii</name>
    <dbReference type="NCBI Taxonomy" id="284811"/>
    <lineage>
        <taxon>Eukaryota</taxon>
        <taxon>Fungi</taxon>
        <taxon>Dikarya</taxon>
        <taxon>Ascomycota</taxon>
        <taxon>Saccharomycotina</taxon>
        <taxon>Saccharomycetes</taxon>
        <taxon>Saccharomycetales</taxon>
        <taxon>Saccharomycetaceae</taxon>
        <taxon>Eremothecium</taxon>
    </lineage>
</organism>
<gene>
    <name type="primary">SWF1</name>
    <name type="ordered locus">AGR065W</name>
</gene>
<proteinExistence type="inferred from homology"/>
<protein>
    <recommendedName>
        <fullName>Palmitoyltransferase SWF1</fullName>
        <ecNumber>2.3.1.225</ecNumber>
    </recommendedName>
</protein>
<comment type="function">
    <text evidence="1">Palmitoyltransferase that targets several endosomal SNAREs. Palmitoylates the SNAREs at cysteine residues close to the cytoplasmic end of their transmembrane domain. May have a role in the cellular quality control of transmembrane domain-containing proteins (By similarity).</text>
</comment>
<comment type="catalytic activity">
    <reaction>
        <text>L-cysteinyl-[protein] + hexadecanoyl-CoA = S-hexadecanoyl-L-cysteinyl-[protein] + CoA</text>
        <dbReference type="Rhea" id="RHEA:36683"/>
        <dbReference type="Rhea" id="RHEA-COMP:10131"/>
        <dbReference type="Rhea" id="RHEA-COMP:11032"/>
        <dbReference type="ChEBI" id="CHEBI:29950"/>
        <dbReference type="ChEBI" id="CHEBI:57287"/>
        <dbReference type="ChEBI" id="CHEBI:57379"/>
        <dbReference type="ChEBI" id="CHEBI:74151"/>
        <dbReference type="EC" id="2.3.1.225"/>
    </reaction>
</comment>
<comment type="subcellular location">
    <subcellularLocation>
        <location evidence="1">Endoplasmic reticulum membrane</location>
        <topology evidence="1">Multi-pass membrane protein</topology>
    </subcellularLocation>
</comment>
<comment type="domain">
    <text evidence="1">The DHHC domain is required for palmitoyltransferase activity.</text>
</comment>
<comment type="similarity">
    <text evidence="4">Belongs to the DHHC palmitoyltransferase family. SWF1 subfamily.</text>
</comment>
<reference key="1">
    <citation type="journal article" date="2004" name="Science">
        <title>The Ashbya gossypii genome as a tool for mapping the ancient Saccharomyces cerevisiae genome.</title>
        <authorList>
            <person name="Dietrich F.S."/>
            <person name="Voegeli S."/>
            <person name="Brachat S."/>
            <person name="Lerch A."/>
            <person name="Gates K."/>
            <person name="Steiner S."/>
            <person name="Mohr C."/>
            <person name="Poehlmann R."/>
            <person name="Luedi P."/>
            <person name="Choi S."/>
            <person name="Wing R.A."/>
            <person name="Flavier A."/>
            <person name="Gaffney T.D."/>
            <person name="Philippsen P."/>
        </authorList>
    </citation>
    <scope>NUCLEOTIDE SEQUENCE [LARGE SCALE GENOMIC DNA]</scope>
    <source>
        <strain>ATCC 10895 / CBS 109.51 / FGSC 9923 / NRRL Y-1056</strain>
    </source>
</reference>
<reference key="2">
    <citation type="journal article" date="2013" name="G3 (Bethesda)">
        <title>Genomes of Ashbya fungi isolated from insects reveal four mating-type loci, numerous translocations, lack of transposons, and distinct gene duplications.</title>
        <authorList>
            <person name="Dietrich F.S."/>
            <person name="Voegeli S."/>
            <person name="Kuo S."/>
            <person name="Philippsen P."/>
        </authorList>
    </citation>
    <scope>GENOME REANNOTATION</scope>
    <source>
        <strain>ATCC 10895 / CBS 109.51 / FGSC 9923 / NRRL Y-1056</strain>
    </source>
</reference>
<name>SWF1_EREGS</name>
<keyword id="KW-0012">Acyltransferase</keyword>
<keyword id="KW-0256">Endoplasmic reticulum</keyword>
<keyword id="KW-0449">Lipoprotein</keyword>
<keyword id="KW-0472">Membrane</keyword>
<keyword id="KW-0564">Palmitate</keyword>
<keyword id="KW-1185">Reference proteome</keyword>
<keyword id="KW-0808">Transferase</keyword>
<keyword id="KW-0812">Transmembrane</keyword>
<keyword id="KW-1133">Transmembrane helix</keyword>
<accession>Q74ZZ2</accession>